<sequence>MGKIALQLKATLENVTNLRPVGEDFRWYLKMKCGNCGEISEKWQYIRLMDSVALKGGRGSASMVQKCKLCARENSIDILSSTIKAYNAEDNEKFKTIVEFECRGLEPVDFQPQAGFAADGVESGTVFSDINLQEKDWTDYDEKAQESVGIFEVTHQFVKC</sequence>
<comment type="subunit">
    <text evidence="1">Monomer.</text>
</comment>
<comment type="alternative products">
    <event type="alternative splicing"/>
    <isoform>
        <id>Q8BHG2-1</id>
        <name>1</name>
        <sequence type="displayed"/>
    </isoform>
    <isoform>
        <id>Q8BHG2-2</id>
        <name>2</name>
        <sequence type="described" ref="VSP_021888"/>
    </isoform>
    <isoform>
        <id>Q8BHG2-3</id>
        <name>3</name>
        <sequence type="described" ref="VSP_021887"/>
    </isoform>
</comment>
<comment type="domain">
    <text evidence="1">The N-terminal and the C-terminal half of the protein have a very similar 3D-structure, suggesting they arose from duplication. Requires a bound zinc ion for normal folding and solubility.</text>
</comment>
<comment type="similarity">
    <text evidence="4">Belongs to the UPF0587 family.</text>
</comment>
<keyword id="KW-0025">Alternative splicing</keyword>
<keyword id="KW-0479">Metal-binding</keyword>
<keyword id="KW-0597">Phosphoprotein</keyword>
<keyword id="KW-1185">Reference proteome</keyword>
<keyword id="KW-0862">Zinc</keyword>
<dbReference type="EMBL" id="AK002776">
    <property type="protein sequence ID" value="BAB22350.1"/>
    <property type="molecule type" value="mRNA"/>
</dbReference>
<dbReference type="EMBL" id="AK003575">
    <property type="protein sequence ID" value="BAB22867.1"/>
    <property type="molecule type" value="mRNA"/>
</dbReference>
<dbReference type="EMBL" id="AK032590">
    <property type="protein sequence ID" value="BAC27937.1"/>
    <property type="molecule type" value="mRNA"/>
</dbReference>
<dbReference type="EMBL" id="AK050486">
    <property type="protein sequence ID" value="BAC34284.1"/>
    <property type="molecule type" value="mRNA"/>
</dbReference>
<dbReference type="EMBL" id="AK050533">
    <property type="protein sequence ID" value="BAC34312.1"/>
    <property type="molecule type" value="mRNA"/>
</dbReference>
<dbReference type="EMBL" id="AK160674">
    <property type="protein sequence ID" value="BAE35952.1"/>
    <property type="molecule type" value="mRNA"/>
</dbReference>
<dbReference type="EMBL" id="AL611936">
    <property type="status" value="NOT_ANNOTATED_CDS"/>
    <property type="molecule type" value="Genomic_DNA"/>
</dbReference>
<dbReference type="EMBL" id="BC019215">
    <property type="protein sequence ID" value="AAH19215.1"/>
    <property type="molecule type" value="mRNA"/>
</dbReference>
<dbReference type="CCDS" id="CCDS18442.1">
    <molecule id="Q8BHG2-3"/>
</dbReference>
<dbReference type="CCDS" id="CCDS84769.1">
    <molecule id="Q8BHG2-1"/>
</dbReference>
<dbReference type="RefSeq" id="NP_001334089.1">
    <molecule id="Q8BHG2-1"/>
    <property type="nucleotide sequence ID" value="NM_001347160.1"/>
</dbReference>
<dbReference type="RefSeq" id="NP_083030.1">
    <molecule id="Q8BHG2-3"/>
    <property type="nucleotide sequence ID" value="NM_028754.2"/>
</dbReference>
<dbReference type="SMR" id="Q8BHG2"/>
<dbReference type="BioGRID" id="216491">
    <property type="interactions" value="1"/>
</dbReference>
<dbReference type="FunCoup" id="Q8BHG2">
    <property type="interactions" value="2169"/>
</dbReference>
<dbReference type="iPTMnet" id="Q8BHG2"/>
<dbReference type="PhosphoSitePlus" id="Q8BHG2"/>
<dbReference type="SwissPalm" id="Q8BHG2"/>
<dbReference type="REPRODUCTION-2DPAGE" id="Q8BHG2"/>
<dbReference type="jPOST" id="Q8BHG2"/>
<dbReference type="PaxDb" id="10090-ENSMUSP00000119565"/>
<dbReference type="PeptideAtlas" id="Q8BHG2"/>
<dbReference type="Pumba" id="Q8BHG2"/>
<dbReference type="Antibodypedia" id="52610">
    <property type="antibodies" value="64 antibodies from 10 providers"/>
</dbReference>
<dbReference type="Ensembl" id="ENSMUST00000106727.10">
    <molecule id="Q8BHG2-2"/>
    <property type="protein sequence ID" value="ENSMUSP00000102338.4"/>
    <property type="gene ID" value="ENSMUSG00000028608.16"/>
</dbReference>
<dbReference type="Ensembl" id="ENSMUST00000125107.8">
    <molecule id="Q8BHG2-3"/>
    <property type="protein sequence ID" value="ENSMUSP00000119565.2"/>
    <property type="gene ID" value="ENSMUSG00000028608.16"/>
</dbReference>
<dbReference type="Ensembl" id="ENSMUST00000135454.8">
    <molecule id="Q8BHG2-1"/>
    <property type="protein sequence ID" value="ENSMUSP00000114234.2"/>
    <property type="gene ID" value="ENSMUSG00000028608.16"/>
</dbReference>
<dbReference type="GeneID" id="74098"/>
<dbReference type="KEGG" id="mmu:74098"/>
<dbReference type="UCSC" id="uc008uak.1">
    <molecule id="Q8BHG2-2"/>
    <property type="organism name" value="mouse"/>
</dbReference>
<dbReference type="UCSC" id="uc008ual.1">
    <molecule id="Q8BHG2-1"/>
    <property type="organism name" value="mouse"/>
</dbReference>
<dbReference type="UCSC" id="uc008uam.1">
    <molecule id="Q8BHG2-3"/>
    <property type="organism name" value="mouse"/>
</dbReference>
<dbReference type="AGR" id="MGI:1921348"/>
<dbReference type="CTD" id="54987"/>
<dbReference type="MGI" id="MGI:1921348">
    <property type="gene designation" value="Czib"/>
</dbReference>
<dbReference type="VEuPathDB" id="HostDB:ENSMUSG00000028608"/>
<dbReference type="eggNOG" id="KOG1296">
    <property type="taxonomic scope" value="Eukaryota"/>
</dbReference>
<dbReference type="GeneTree" id="ENSGT00390000001523"/>
<dbReference type="InParanoid" id="Q8BHG2"/>
<dbReference type="OMA" id="TAHFVWR"/>
<dbReference type="OrthoDB" id="11784at9989"/>
<dbReference type="TreeFam" id="TF105959"/>
<dbReference type="BioGRID-ORCS" id="74098">
    <property type="hits" value="2 hits in 60 CRISPR screens"/>
</dbReference>
<dbReference type="PRO" id="PR:Q8BHG2"/>
<dbReference type="Proteomes" id="UP000000589">
    <property type="component" value="Chromosome 4"/>
</dbReference>
<dbReference type="RNAct" id="Q8BHG2">
    <property type="molecule type" value="protein"/>
</dbReference>
<dbReference type="Bgee" id="ENSMUSG00000028608">
    <property type="expression patterns" value="Expressed in undifferentiated genital tubercle and 257 other cell types or tissues"/>
</dbReference>
<dbReference type="ExpressionAtlas" id="Q8BHG2">
    <property type="expression patterns" value="baseline and differential"/>
</dbReference>
<dbReference type="GO" id="GO:0008270">
    <property type="term" value="F:zinc ion binding"/>
    <property type="evidence" value="ECO:0000250"/>
    <property type="project" value="UniProtKB"/>
</dbReference>
<dbReference type="InterPro" id="IPR008584">
    <property type="entry name" value="CXXC_Zn-binding_euk"/>
</dbReference>
<dbReference type="PANTHER" id="PTHR12857">
    <property type="entry name" value="CXXC MOTIF CONTAINING ZINC BINDING PROTEIN"/>
    <property type="match status" value="1"/>
</dbReference>
<dbReference type="PANTHER" id="PTHR12857:SF0">
    <property type="entry name" value="CXXC MOTIF CONTAINING ZINC BINDING PROTEIN"/>
    <property type="match status" value="1"/>
</dbReference>
<dbReference type="Pfam" id="PF05907">
    <property type="entry name" value="CXXC_Zn-b_euk"/>
    <property type="match status" value="1"/>
</dbReference>
<dbReference type="SUPFAM" id="SSF141678">
    <property type="entry name" value="MAL13P1.257-like"/>
    <property type="match status" value="1"/>
</dbReference>
<reference key="1">
    <citation type="journal article" date="2005" name="Science">
        <title>The transcriptional landscape of the mammalian genome.</title>
        <authorList>
            <person name="Carninci P."/>
            <person name="Kasukawa T."/>
            <person name="Katayama S."/>
            <person name="Gough J."/>
            <person name="Frith M.C."/>
            <person name="Maeda N."/>
            <person name="Oyama R."/>
            <person name="Ravasi T."/>
            <person name="Lenhard B."/>
            <person name="Wells C."/>
            <person name="Kodzius R."/>
            <person name="Shimokawa K."/>
            <person name="Bajic V.B."/>
            <person name="Brenner S.E."/>
            <person name="Batalov S."/>
            <person name="Forrest A.R."/>
            <person name="Zavolan M."/>
            <person name="Davis M.J."/>
            <person name="Wilming L.G."/>
            <person name="Aidinis V."/>
            <person name="Allen J.E."/>
            <person name="Ambesi-Impiombato A."/>
            <person name="Apweiler R."/>
            <person name="Aturaliya R.N."/>
            <person name="Bailey T.L."/>
            <person name="Bansal M."/>
            <person name="Baxter L."/>
            <person name="Beisel K.W."/>
            <person name="Bersano T."/>
            <person name="Bono H."/>
            <person name="Chalk A.M."/>
            <person name="Chiu K.P."/>
            <person name="Choudhary V."/>
            <person name="Christoffels A."/>
            <person name="Clutterbuck D.R."/>
            <person name="Crowe M.L."/>
            <person name="Dalla E."/>
            <person name="Dalrymple B.P."/>
            <person name="de Bono B."/>
            <person name="Della Gatta G."/>
            <person name="di Bernardo D."/>
            <person name="Down T."/>
            <person name="Engstrom P."/>
            <person name="Fagiolini M."/>
            <person name="Faulkner G."/>
            <person name="Fletcher C.F."/>
            <person name="Fukushima T."/>
            <person name="Furuno M."/>
            <person name="Futaki S."/>
            <person name="Gariboldi M."/>
            <person name="Georgii-Hemming P."/>
            <person name="Gingeras T.R."/>
            <person name="Gojobori T."/>
            <person name="Green R.E."/>
            <person name="Gustincich S."/>
            <person name="Harbers M."/>
            <person name="Hayashi Y."/>
            <person name="Hensch T.K."/>
            <person name="Hirokawa N."/>
            <person name="Hill D."/>
            <person name="Huminiecki L."/>
            <person name="Iacono M."/>
            <person name="Ikeo K."/>
            <person name="Iwama A."/>
            <person name="Ishikawa T."/>
            <person name="Jakt M."/>
            <person name="Kanapin A."/>
            <person name="Katoh M."/>
            <person name="Kawasawa Y."/>
            <person name="Kelso J."/>
            <person name="Kitamura H."/>
            <person name="Kitano H."/>
            <person name="Kollias G."/>
            <person name="Krishnan S.P."/>
            <person name="Kruger A."/>
            <person name="Kummerfeld S.K."/>
            <person name="Kurochkin I.V."/>
            <person name="Lareau L.F."/>
            <person name="Lazarevic D."/>
            <person name="Lipovich L."/>
            <person name="Liu J."/>
            <person name="Liuni S."/>
            <person name="McWilliam S."/>
            <person name="Madan Babu M."/>
            <person name="Madera M."/>
            <person name="Marchionni L."/>
            <person name="Matsuda H."/>
            <person name="Matsuzawa S."/>
            <person name="Miki H."/>
            <person name="Mignone F."/>
            <person name="Miyake S."/>
            <person name="Morris K."/>
            <person name="Mottagui-Tabar S."/>
            <person name="Mulder N."/>
            <person name="Nakano N."/>
            <person name="Nakauchi H."/>
            <person name="Ng P."/>
            <person name="Nilsson R."/>
            <person name="Nishiguchi S."/>
            <person name="Nishikawa S."/>
            <person name="Nori F."/>
            <person name="Ohara O."/>
            <person name="Okazaki Y."/>
            <person name="Orlando V."/>
            <person name="Pang K.C."/>
            <person name="Pavan W.J."/>
            <person name="Pavesi G."/>
            <person name="Pesole G."/>
            <person name="Petrovsky N."/>
            <person name="Piazza S."/>
            <person name="Reed J."/>
            <person name="Reid J.F."/>
            <person name="Ring B.Z."/>
            <person name="Ringwald M."/>
            <person name="Rost B."/>
            <person name="Ruan Y."/>
            <person name="Salzberg S.L."/>
            <person name="Sandelin A."/>
            <person name="Schneider C."/>
            <person name="Schoenbach C."/>
            <person name="Sekiguchi K."/>
            <person name="Semple C.A."/>
            <person name="Seno S."/>
            <person name="Sessa L."/>
            <person name="Sheng Y."/>
            <person name="Shibata Y."/>
            <person name="Shimada H."/>
            <person name="Shimada K."/>
            <person name="Silva D."/>
            <person name="Sinclair B."/>
            <person name="Sperling S."/>
            <person name="Stupka E."/>
            <person name="Sugiura K."/>
            <person name="Sultana R."/>
            <person name="Takenaka Y."/>
            <person name="Taki K."/>
            <person name="Tammoja K."/>
            <person name="Tan S.L."/>
            <person name="Tang S."/>
            <person name="Taylor M.S."/>
            <person name="Tegner J."/>
            <person name="Teichmann S.A."/>
            <person name="Ueda H.R."/>
            <person name="van Nimwegen E."/>
            <person name="Verardo R."/>
            <person name="Wei C.L."/>
            <person name="Yagi K."/>
            <person name="Yamanishi H."/>
            <person name="Zabarovsky E."/>
            <person name="Zhu S."/>
            <person name="Zimmer A."/>
            <person name="Hide W."/>
            <person name="Bult C."/>
            <person name="Grimmond S.M."/>
            <person name="Teasdale R.D."/>
            <person name="Liu E.T."/>
            <person name="Brusic V."/>
            <person name="Quackenbush J."/>
            <person name="Wahlestedt C."/>
            <person name="Mattick J.S."/>
            <person name="Hume D.A."/>
            <person name="Kai C."/>
            <person name="Sasaki D."/>
            <person name="Tomaru Y."/>
            <person name="Fukuda S."/>
            <person name="Kanamori-Katayama M."/>
            <person name="Suzuki M."/>
            <person name="Aoki J."/>
            <person name="Arakawa T."/>
            <person name="Iida J."/>
            <person name="Imamura K."/>
            <person name="Itoh M."/>
            <person name="Kato T."/>
            <person name="Kawaji H."/>
            <person name="Kawagashira N."/>
            <person name="Kawashima T."/>
            <person name="Kojima M."/>
            <person name="Kondo S."/>
            <person name="Konno H."/>
            <person name="Nakano K."/>
            <person name="Ninomiya N."/>
            <person name="Nishio T."/>
            <person name="Okada M."/>
            <person name="Plessy C."/>
            <person name="Shibata K."/>
            <person name="Shiraki T."/>
            <person name="Suzuki S."/>
            <person name="Tagami M."/>
            <person name="Waki K."/>
            <person name="Watahiki A."/>
            <person name="Okamura-Oho Y."/>
            <person name="Suzuki H."/>
            <person name="Kawai J."/>
            <person name="Hayashizaki Y."/>
        </authorList>
    </citation>
    <scope>NUCLEOTIDE SEQUENCE [LARGE SCALE MRNA] (ISOFORMS 1; 2 AND 3)</scope>
    <source>
        <strain>C57BL/6J</strain>
        <tissue>Hippocampus</tissue>
        <tissue>Kidney</tissue>
        <tissue>Olfactory bulb</tissue>
        <tissue>Pancreas</tissue>
    </source>
</reference>
<reference key="2">
    <citation type="journal article" date="2009" name="PLoS Biol.">
        <title>Lineage-specific biology revealed by a finished genome assembly of the mouse.</title>
        <authorList>
            <person name="Church D.M."/>
            <person name="Goodstadt L."/>
            <person name="Hillier L.W."/>
            <person name="Zody M.C."/>
            <person name="Goldstein S."/>
            <person name="She X."/>
            <person name="Bult C.J."/>
            <person name="Agarwala R."/>
            <person name="Cherry J.L."/>
            <person name="DiCuccio M."/>
            <person name="Hlavina W."/>
            <person name="Kapustin Y."/>
            <person name="Meric P."/>
            <person name="Maglott D."/>
            <person name="Birtle Z."/>
            <person name="Marques A.C."/>
            <person name="Graves T."/>
            <person name="Zhou S."/>
            <person name="Teague B."/>
            <person name="Potamousis K."/>
            <person name="Churas C."/>
            <person name="Place M."/>
            <person name="Herschleb J."/>
            <person name="Runnheim R."/>
            <person name="Forrest D."/>
            <person name="Amos-Landgraf J."/>
            <person name="Schwartz D.C."/>
            <person name="Cheng Z."/>
            <person name="Lindblad-Toh K."/>
            <person name="Eichler E.E."/>
            <person name="Ponting C.P."/>
        </authorList>
    </citation>
    <scope>NUCLEOTIDE SEQUENCE [LARGE SCALE GENOMIC DNA]</scope>
    <source>
        <strain>C57BL/6J</strain>
    </source>
</reference>
<reference key="3">
    <citation type="journal article" date="2004" name="Genome Res.">
        <title>The status, quality, and expansion of the NIH full-length cDNA project: the Mammalian Gene Collection (MGC).</title>
        <authorList>
            <consortium name="The MGC Project Team"/>
        </authorList>
    </citation>
    <scope>NUCLEOTIDE SEQUENCE [LARGE SCALE MRNA] (ISOFORM 3)</scope>
    <source>
        <strain>FVB/N</strain>
        <tissue>Kidney</tissue>
    </source>
</reference>
<reference key="4">
    <citation type="journal article" date="2010" name="Cell">
        <title>A tissue-specific atlas of mouse protein phosphorylation and expression.</title>
        <authorList>
            <person name="Huttlin E.L."/>
            <person name="Jedrychowski M.P."/>
            <person name="Elias J.E."/>
            <person name="Goswami T."/>
            <person name="Rad R."/>
            <person name="Beausoleil S.A."/>
            <person name="Villen J."/>
            <person name="Haas W."/>
            <person name="Sowa M.E."/>
            <person name="Gygi S.P."/>
        </authorList>
    </citation>
    <scope>IDENTIFICATION BY MASS SPECTROMETRY [LARGE SCALE ANALYSIS]</scope>
    <source>
        <tissue>Brain</tissue>
        <tissue>Brown adipose tissue</tissue>
        <tissue>Heart</tissue>
        <tissue>Kidney</tissue>
        <tissue>Liver</tissue>
        <tissue>Lung</tissue>
        <tissue>Pancreas</tissue>
        <tissue>Spleen</tissue>
        <tissue>Testis</tissue>
    </source>
</reference>
<name>CZIB_MOUSE</name>
<gene>
    <name type="primary">Czib</name>
</gene>
<organism>
    <name type="scientific">Mus musculus</name>
    <name type="common">Mouse</name>
    <dbReference type="NCBI Taxonomy" id="10090"/>
    <lineage>
        <taxon>Eukaryota</taxon>
        <taxon>Metazoa</taxon>
        <taxon>Chordata</taxon>
        <taxon>Craniata</taxon>
        <taxon>Vertebrata</taxon>
        <taxon>Euteleostomi</taxon>
        <taxon>Mammalia</taxon>
        <taxon>Eutheria</taxon>
        <taxon>Euarchontoglires</taxon>
        <taxon>Glires</taxon>
        <taxon>Rodentia</taxon>
        <taxon>Myomorpha</taxon>
        <taxon>Muroidea</taxon>
        <taxon>Muridae</taxon>
        <taxon>Murinae</taxon>
        <taxon>Mus</taxon>
        <taxon>Mus</taxon>
    </lineage>
</organism>
<proteinExistence type="evidence at protein level"/>
<evidence type="ECO:0000250" key="1">
    <source>
        <dbReference type="UniProtKB" id="Q9NWV4"/>
    </source>
</evidence>
<evidence type="ECO:0000303" key="2">
    <source>
    </source>
</evidence>
<evidence type="ECO:0000303" key="3">
    <source>
    </source>
</evidence>
<evidence type="ECO:0000305" key="4"/>
<feature type="chain" id="PRO_0000264152" description="CXXC motif containing zinc binding protein">
    <location>
        <begin position="1"/>
        <end position="160"/>
    </location>
</feature>
<feature type="binding site" evidence="1">
    <location>
        <position position="33"/>
    </location>
    <ligand>
        <name>Zn(2+)</name>
        <dbReference type="ChEBI" id="CHEBI:29105"/>
    </ligand>
</feature>
<feature type="binding site" evidence="1">
    <location>
        <position position="36"/>
    </location>
    <ligand>
        <name>Zn(2+)</name>
        <dbReference type="ChEBI" id="CHEBI:29105"/>
    </ligand>
</feature>
<feature type="binding site" evidence="1">
    <location>
        <position position="67"/>
    </location>
    <ligand>
        <name>Zn(2+)</name>
        <dbReference type="ChEBI" id="CHEBI:29105"/>
    </ligand>
</feature>
<feature type="binding site" evidence="1">
    <location>
        <position position="70"/>
    </location>
    <ligand>
        <name>Zn(2+)</name>
        <dbReference type="ChEBI" id="CHEBI:29105"/>
    </ligand>
</feature>
<feature type="modified residue" description="Phosphoserine" evidence="1">
    <location>
        <position position="75"/>
    </location>
</feature>
<feature type="splice variant" id="VSP_021887" description="In isoform 3." evidence="2 3">
    <original>MG</original>
    <variation>MEGVRLGWRGLSREGRGGAWHAAERTRPCTQRVPPSSQ</variation>
    <location>
        <begin position="1"/>
        <end position="2"/>
    </location>
</feature>
<feature type="splice variant" id="VSP_021888" description="In isoform 2." evidence="3">
    <original>DWTDYDEKAQESVGIFEVTHQFVKC</original>
    <variation>AHVFSSYNCFLQEGTQVWENDMIFLVRRPRDGV</variation>
    <location>
        <begin position="136"/>
        <end position="160"/>
    </location>
</feature>
<feature type="sequence conflict" description="In Ref. 1; BAC34312." evidence="4" ref="1">
    <original>F</original>
    <variation>L</variation>
    <location>
        <position position="25"/>
    </location>
</feature>
<accession>Q8BHG2</accession>
<accession>A2A8E3</accession>
<accession>A2A8E5</accession>
<accession>Q8C7D6</accession>
<accession>Q9D1H2</accession>
<accession>Q9DCH5</accession>
<protein>
    <recommendedName>
        <fullName evidence="4">CXXC motif containing zinc binding protein</fullName>
    </recommendedName>
    <alternativeName>
        <fullName>UPF0587 protein C1orf123 homolog</fullName>
    </alternativeName>
</protein>